<feature type="chain" id="PRO_1000051220" description="Small ribosomal subunit protein uS9">
    <location>
        <begin position="1"/>
        <end position="130"/>
    </location>
</feature>
<gene>
    <name evidence="1" type="primary">rpsI</name>
    <name type="ordered locus">ECP_3313</name>
</gene>
<accession>Q0TCN6</accession>
<protein>
    <recommendedName>
        <fullName evidence="1">Small ribosomal subunit protein uS9</fullName>
    </recommendedName>
    <alternativeName>
        <fullName evidence="2">30S ribosomal protein S9</fullName>
    </alternativeName>
</protein>
<proteinExistence type="inferred from homology"/>
<name>RS9_ECOL5</name>
<organism>
    <name type="scientific">Escherichia coli O6:K15:H31 (strain 536 / UPEC)</name>
    <dbReference type="NCBI Taxonomy" id="362663"/>
    <lineage>
        <taxon>Bacteria</taxon>
        <taxon>Pseudomonadati</taxon>
        <taxon>Pseudomonadota</taxon>
        <taxon>Gammaproteobacteria</taxon>
        <taxon>Enterobacterales</taxon>
        <taxon>Enterobacteriaceae</taxon>
        <taxon>Escherichia</taxon>
    </lineage>
</organism>
<reference key="1">
    <citation type="journal article" date="2006" name="Mol. Microbiol.">
        <title>Role of pathogenicity island-associated integrases in the genome plasticity of uropathogenic Escherichia coli strain 536.</title>
        <authorList>
            <person name="Hochhut B."/>
            <person name="Wilde C."/>
            <person name="Balling G."/>
            <person name="Middendorf B."/>
            <person name="Dobrindt U."/>
            <person name="Brzuszkiewicz E."/>
            <person name="Gottschalk G."/>
            <person name="Carniel E."/>
            <person name="Hacker J."/>
        </authorList>
    </citation>
    <scope>NUCLEOTIDE SEQUENCE [LARGE SCALE GENOMIC DNA]</scope>
    <source>
        <strain>536 / UPEC</strain>
    </source>
</reference>
<sequence length="130" mass="14856">MAENQYYGTGRRKSSAARVFIKPGNGKIVINQRSLEQYFGRETARMVVRQPLELVDMVEKLDLYITVKGGGISGQAGAIRHGITRALMEYDESLRSELRKAGFVTRDARQVERKKVGLRKARRRPQFSKR</sequence>
<keyword id="KW-0687">Ribonucleoprotein</keyword>
<keyword id="KW-0689">Ribosomal protein</keyword>
<evidence type="ECO:0000255" key="1">
    <source>
        <dbReference type="HAMAP-Rule" id="MF_00532"/>
    </source>
</evidence>
<evidence type="ECO:0000305" key="2"/>
<comment type="similarity">
    <text evidence="1">Belongs to the universal ribosomal protein uS9 family.</text>
</comment>
<dbReference type="EMBL" id="CP000247">
    <property type="protein sequence ID" value="ABG71293.1"/>
    <property type="molecule type" value="Genomic_DNA"/>
</dbReference>
<dbReference type="RefSeq" id="WP_000829818.1">
    <property type="nucleotide sequence ID" value="NC_008253.1"/>
</dbReference>
<dbReference type="SMR" id="Q0TCN6"/>
<dbReference type="GeneID" id="98390344"/>
<dbReference type="KEGG" id="ecp:ECP_3313"/>
<dbReference type="HOGENOM" id="CLU_046483_2_1_6"/>
<dbReference type="Proteomes" id="UP000009182">
    <property type="component" value="Chromosome"/>
</dbReference>
<dbReference type="GO" id="GO:0022627">
    <property type="term" value="C:cytosolic small ribosomal subunit"/>
    <property type="evidence" value="ECO:0007669"/>
    <property type="project" value="TreeGrafter"/>
</dbReference>
<dbReference type="GO" id="GO:0003723">
    <property type="term" value="F:RNA binding"/>
    <property type="evidence" value="ECO:0007669"/>
    <property type="project" value="TreeGrafter"/>
</dbReference>
<dbReference type="GO" id="GO:0003735">
    <property type="term" value="F:structural constituent of ribosome"/>
    <property type="evidence" value="ECO:0007669"/>
    <property type="project" value="InterPro"/>
</dbReference>
<dbReference type="GO" id="GO:0006412">
    <property type="term" value="P:translation"/>
    <property type="evidence" value="ECO:0007669"/>
    <property type="project" value="UniProtKB-UniRule"/>
</dbReference>
<dbReference type="FunFam" id="3.30.230.10:FF:000001">
    <property type="entry name" value="30S ribosomal protein S9"/>
    <property type="match status" value="1"/>
</dbReference>
<dbReference type="Gene3D" id="3.30.230.10">
    <property type="match status" value="1"/>
</dbReference>
<dbReference type="HAMAP" id="MF_00532_B">
    <property type="entry name" value="Ribosomal_uS9_B"/>
    <property type="match status" value="1"/>
</dbReference>
<dbReference type="InterPro" id="IPR020568">
    <property type="entry name" value="Ribosomal_Su5_D2-typ_SF"/>
</dbReference>
<dbReference type="InterPro" id="IPR000754">
    <property type="entry name" value="Ribosomal_uS9"/>
</dbReference>
<dbReference type="InterPro" id="IPR023035">
    <property type="entry name" value="Ribosomal_uS9_bac/plastid"/>
</dbReference>
<dbReference type="InterPro" id="IPR020574">
    <property type="entry name" value="Ribosomal_uS9_CS"/>
</dbReference>
<dbReference type="InterPro" id="IPR014721">
    <property type="entry name" value="Ribsml_uS5_D2-typ_fold_subgr"/>
</dbReference>
<dbReference type="NCBIfam" id="NF001099">
    <property type="entry name" value="PRK00132.1"/>
    <property type="match status" value="1"/>
</dbReference>
<dbReference type="PANTHER" id="PTHR21569">
    <property type="entry name" value="RIBOSOMAL PROTEIN S9"/>
    <property type="match status" value="1"/>
</dbReference>
<dbReference type="PANTHER" id="PTHR21569:SF1">
    <property type="entry name" value="SMALL RIBOSOMAL SUBUNIT PROTEIN US9M"/>
    <property type="match status" value="1"/>
</dbReference>
<dbReference type="Pfam" id="PF00380">
    <property type="entry name" value="Ribosomal_S9"/>
    <property type="match status" value="1"/>
</dbReference>
<dbReference type="SUPFAM" id="SSF54211">
    <property type="entry name" value="Ribosomal protein S5 domain 2-like"/>
    <property type="match status" value="1"/>
</dbReference>
<dbReference type="PROSITE" id="PS00360">
    <property type="entry name" value="RIBOSOMAL_S9"/>
    <property type="match status" value="1"/>
</dbReference>